<reference key="1">
    <citation type="journal article" date="2005" name="BMC Biol.">
        <title>The complete chloroplast DNA sequences of the charophycean green algae Staurastrum and Zygnema reveal that the chloroplast genome underwent extensive changes during the evolution of the Zygnematales.</title>
        <authorList>
            <person name="Turmel M."/>
            <person name="Otis C."/>
            <person name="Lemieux C."/>
        </authorList>
    </citation>
    <scope>NUCLEOTIDE SEQUENCE [LARGE SCALE GENOMIC DNA]</scope>
</reference>
<dbReference type="EC" id="7.1.1.-" evidence="1"/>
<dbReference type="EMBL" id="AY958086">
    <property type="protein sequence ID" value="AAX45820.1"/>
    <property type="molecule type" value="Genomic_DNA"/>
</dbReference>
<dbReference type="RefSeq" id="YP_636525.1">
    <property type="nucleotide sequence ID" value="NC_008117.1"/>
</dbReference>
<dbReference type="SMR" id="Q32RK1"/>
<dbReference type="GeneID" id="4108140"/>
<dbReference type="GO" id="GO:0009535">
    <property type="term" value="C:chloroplast thylakoid membrane"/>
    <property type="evidence" value="ECO:0007669"/>
    <property type="project" value="UniProtKB-SubCell"/>
</dbReference>
<dbReference type="GO" id="GO:0051539">
    <property type="term" value="F:4 iron, 4 sulfur cluster binding"/>
    <property type="evidence" value="ECO:0007669"/>
    <property type="project" value="UniProtKB-KW"/>
</dbReference>
<dbReference type="GO" id="GO:0005506">
    <property type="term" value="F:iron ion binding"/>
    <property type="evidence" value="ECO:0007669"/>
    <property type="project" value="UniProtKB-UniRule"/>
</dbReference>
<dbReference type="GO" id="GO:0008137">
    <property type="term" value="F:NADH dehydrogenase (ubiquinone) activity"/>
    <property type="evidence" value="ECO:0007669"/>
    <property type="project" value="InterPro"/>
</dbReference>
<dbReference type="GO" id="GO:0048038">
    <property type="term" value="F:quinone binding"/>
    <property type="evidence" value="ECO:0007669"/>
    <property type="project" value="UniProtKB-KW"/>
</dbReference>
<dbReference type="GO" id="GO:0019684">
    <property type="term" value="P:photosynthesis, light reaction"/>
    <property type="evidence" value="ECO:0007669"/>
    <property type="project" value="UniProtKB-UniRule"/>
</dbReference>
<dbReference type="Gene3D" id="3.30.70.3270">
    <property type="match status" value="1"/>
</dbReference>
<dbReference type="HAMAP" id="MF_01351">
    <property type="entry name" value="NDH1_NuoI"/>
    <property type="match status" value="1"/>
</dbReference>
<dbReference type="InterPro" id="IPR017896">
    <property type="entry name" value="4Fe4S_Fe-S-bd"/>
</dbReference>
<dbReference type="InterPro" id="IPR017900">
    <property type="entry name" value="4Fe4S_Fe_S_CS"/>
</dbReference>
<dbReference type="InterPro" id="IPR010226">
    <property type="entry name" value="NADH_quinone_OxRdtase_chainI"/>
</dbReference>
<dbReference type="InterPro" id="IPR004497">
    <property type="entry name" value="NDHI"/>
</dbReference>
<dbReference type="NCBIfam" id="TIGR00403">
    <property type="entry name" value="ndhI"/>
    <property type="match status" value="1"/>
</dbReference>
<dbReference type="NCBIfam" id="TIGR01971">
    <property type="entry name" value="NuoI"/>
    <property type="match status" value="1"/>
</dbReference>
<dbReference type="NCBIfam" id="NF004537">
    <property type="entry name" value="PRK05888.1-3"/>
    <property type="match status" value="1"/>
</dbReference>
<dbReference type="PANTHER" id="PTHR47275">
    <property type="entry name" value="NAD(P)H-QUINONE OXIDOREDUCTASE SUBUNIT I, CHLOROPLASTIC"/>
    <property type="match status" value="1"/>
</dbReference>
<dbReference type="PANTHER" id="PTHR47275:SF1">
    <property type="entry name" value="NAD(P)H-QUINONE OXIDOREDUCTASE SUBUNIT I, CHLOROPLASTIC"/>
    <property type="match status" value="1"/>
</dbReference>
<dbReference type="Pfam" id="PF12838">
    <property type="entry name" value="Fer4_7"/>
    <property type="match status" value="1"/>
</dbReference>
<dbReference type="SUPFAM" id="SSF54862">
    <property type="entry name" value="4Fe-4S ferredoxins"/>
    <property type="match status" value="1"/>
</dbReference>
<dbReference type="PROSITE" id="PS00198">
    <property type="entry name" value="4FE4S_FER_1"/>
    <property type="match status" value="2"/>
</dbReference>
<dbReference type="PROSITE" id="PS51379">
    <property type="entry name" value="4FE4S_FER_2"/>
    <property type="match status" value="2"/>
</dbReference>
<gene>
    <name evidence="1" type="primary">ndhI</name>
</gene>
<evidence type="ECO:0000255" key="1">
    <source>
        <dbReference type="HAMAP-Rule" id="MF_01351"/>
    </source>
</evidence>
<accession>Q32RK1</accession>
<name>NDHI_ZYGCR</name>
<geneLocation type="chloroplast"/>
<comment type="function">
    <text evidence="1">NDH shuttles electrons from NAD(P)H:plastoquinone, via FMN and iron-sulfur (Fe-S) centers, to quinones in the photosynthetic chain and possibly in a chloroplast respiratory chain. The immediate electron acceptor for the enzyme in this species is believed to be plastoquinone. Couples the redox reaction to proton translocation, and thus conserves the redox energy in a proton gradient.</text>
</comment>
<comment type="catalytic activity">
    <reaction evidence="1">
        <text>a plastoquinone + NADH + (n+1) H(+)(in) = a plastoquinol + NAD(+) + n H(+)(out)</text>
        <dbReference type="Rhea" id="RHEA:42608"/>
        <dbReference type="Rhea" id="RHEA-COMP:9561"/>
        <dbReference type="Rhea" id="RHEA-COMP:9562"/>
        <dbReference type="ChEBI" id="CHEBI:15378"/>
        <dbReference type="ChEBI" id="CHEBI:17757"/>
        <dbReference type="ChEBI" id="CHEBI:57540"/>
        <dbReference type="ChEBI" id="CHEBI:57945"/>
        <dbReference type="ChEBI" id="CHEBI:62192"/>
    </reaction>
</comment>
<comment type="catalytic activity">
    <reaction evidence="1">
        <text>a plastoquinone + NADPH + (n+1) H(+)(in) = a plastoquinol + NADP(+) + n H(+)(out)</text>
        <dbReference type="Rhea" id="RHEA:42612"/>
        <dbReference type="Rhea" id="RHEA-COMP:9561"/>
        <dbReference type="Rhea" id="RHEA-COMP:9562"/>
        <dbReference type="ChEBI" id="CHEBI:15378"/>
        <dbReference type="ChEBI" id="CHEBI:17757"/>
        <dbReference type="ChEBI" id="CHEBI:57783"/>
        <dbReference type="ChEBI" id="CHEBI:58349"/>
        <dbReference type="ChEBI" id="CHEBI:62192"/>
    </reaction>
</comment>
<comment type="cofactor">
    <cofactor evidence="1">
        <name>[4Fe-4S] cluster</name>
        <dbReference type="ChEBI" id="CHEBI:49883"/>
    </cofactor>
    <text evidence="1">Binds 2 [4Fe-4S] clusters per subunit.</text>
</comment>
<comment type="subunit">
    <text evidence="1">NDH is composed of at least 16 different subunits, 5 of which are encoded in the nucleus.</text>
</comment>
<comment type="subcellular location">
    <subcellularLocation>
        <location evidence="1">Plastid</location>
        <location evidence="1">Chloroplast thylakoid membrane</location>
        <topology evidence="1">Peripheral membrane protein</topology>
    </subcellularLocation>
</comment>
<comment type="similarity">
    <text evidence="1">Belongs to the complex I 23 kDa subunit family.</text>
</comment>
<feature type="chain" id="PRO_0000245679" description="NAD(P)H-quinone oxidoreductase subunit I, chloroplastic">
    <location>
        <begin position="1"/>
        <end position="181"/>
    </location>
</feature>
<feature type="domain" description="4Fe-4S ferredoxin-type 1" evidence="1">
    <location>
        <begin position="52"/>
        <end position="81"/>
    </location>
</feature>
<feature type="domain" description="4Fe-4S ferredoxin-type 2" evidence="1">
    <location>
        <begin position="92"/>
        <end position="121"/>
    </location>
</feature>
<feature type="binding site" evidence="1">
    <location>
        <position position="61"/>
    </location>
    <ligand>
        <name>[4Fe-4S] cluster</name>
        <dbReference type="ChEBI" id="CHEBI:49883"/>
        <label>1</label>
    </ligand>
</feature>
<feature type="binding site" evidence="1">
    <location>
        <position position="64"/>
    </location>
    <ligand>
        <name>[4Fe-4S] cluster</name>
        <dbReference type="ChEBI" id="CHEBI:49883"/>
        <label>1</label>
    </ligand>
</feature>
<feature type="binding site" evidence="1">
    <location>
        <position position="67"/>
    </location>
    <ligand>
        <name>[4Fe-4S] cluster</name>
        <dbReference type="ChEBI" id="CHEBI:49883"/>
        <label>1</label>
    </ligand>
</feature>
<feature type="binding site" evidence="1">
    <location>
        <position position="71"/>
    </location>
    <ligand>
        <name>[4Fe-4S] cluster</name>
        <dbReference type="ChEBI" id="CHEBI:49883"/>
        <label>2</label>
    </ligand>
</feature>
<feature type="binding site" evidence="1">
    <location>
        <position position="101"/>
    </location>
    <ligand>
        <name>[4Fe-4S] cluster</name>
        <dbReference type="ChEBI" id="CHEBI:49883"/>
        <label>2</label>
    </ligand>
</feature>
<feature type="binding site" evidence="1">
    <location>
        <position position="104"/>
    </location>
    <ligand>
        <name>[4Fe-4S] cluster</name>
        <dbReference type="ChEBI" id="CHEBI:49883"/>
        <label>2</label>
    </ligand>
</feature>
<feature type="binding site" evidence="1">
    <location>
        <position position="107"/>
    </location>
    <ligand>
        <name>[4Fe-4S] cluster</name>
        <dbReference type="ChEBI" id="CHEBI:49883"/>
        <label>2</label>
    </ligand>
</feature>
<feature type="binding site" evidence="1">
    <location>
        <position position="111"/>
    </location>
    <ligand>
        <name>[4Fe-4S] cluster</name>
        <dbReference type="ChEBI" id="CHEBI:49883"/>
        <label>1</label>
    </ligand>
</feature>
<proteinExistence type="inferred from homology"/>
<keyword id="KW-0004">4Fe-4S</keyword>
<keyword id="KW-0150">Chloroplast</keyword>
<keyword id="KW-0408">Iron</keyword>
<keyword id="KW-0411">Iron-sulfur</keyword>
<keyword id="KW-0472">Membrane</keyword>
<keyword id="KW-0479">Metal-binding</keyword>
<keyword id="KW-0520">NAD</keyword>
<keyword id="KW-0521">NADP</keyword>
<keyword id="KW-0934">Plastid</keyword>
<keyword id="KW-0618">Plastoquinone</keyword>
<keyword id="KW-0874">Quinone</keyword>
<keyword id="KW-0677">Repeat</keyword>
<keyword id="KW-0793">Thylakoid</keyword>
<keyword id="KW-1278">Translocase</keyword>
<sequence length="181" mass="20791">MIKGLQNYSQQALRTARYIGQGFMVTLDHMNRTASTIQYPYEKLIPSERFRGRIHFEFDKCIACEVCVRVCPINLPVVDWEFQKSMKKKQLKSYSIDFGVCIFCGNCVEYCPTNCLSMTEEYELSAYDRHELNYDHVALGRLPFPAAKDPMVQPVYGIGYLEKGIVERTKGSKTITTLSTN</sequence>
<protein>
    <recommendedName>
        <fullName evidence="1">NAD(P)H-quinone oxidoreductase subunit I, chloroplastic</fullName>
        <ecNumber evidence="1">7.1.1.-</ecNumber>
    </recommendedName>
    <alternativeName>
        <fullName evidence="1">NAD(P)H dehydrogenase subunit I</fullName>
        <shortName evidence="1">NDH subunit I</shortName>
    </alternativeName>
    <alternativeName>
        <fullName evidence="1">NADH-plastoquinone oxidoreductase subunit I</fullName>
    </alternativeName>
</protein>
<organism>
    <name type="scientific">Zygnema circumcarinatum</name>
    <name type="common">Green alga</name>
    <dbReference type="NCBI Taxonomy" id="35869"/>
    <lineage>
        <taxon>Eukaryota</taxon>
        <taxon>Viridiplantae</taxon>
        <taxon>Streptophyta</taxon>
        <taxon>Zygnematophyceae</taxon>
        <taxon>Zygnematophycidae</taxon>
        <taxon>Zygnematales</taxon>
        <taxon>Zygnemataceae</taxon>
        <taxon>Zygnema</taxon>
    </lineage>
</organism>